<accession>P39489</accession>
<accession>Q9T0V6</accession>
<sequence>MRLTINLSGFLEEIPEVEAIPYLLKMYLREVLALDIDIDPENPYDTAFKSNGVELNYRYHLTDDDFYFILEK</sequence>
<gene>
    <name type="primary">y03I</name>
    <name type="synonym">agt.5</name>
</gene>
<feature type="chain" id="PRO_0000165103" description="Uncharacterized 8.5 kDa protein in mobB-Gp55 intergenic region">
    <location>
        <begin position="1"/>
        <end position="72"/>
    </location>
</feature>
<reference key="1">
    <citation type="journal article" date="1985" name="EMBO J.">
        <title>Genes 55, alpha gt, 47 and 46 of bacteriophage T4: the genomic organization as deduced by sequence analysis.</title>
        <authorList>
            <person name="Gram H."/>
            <person name="Rueger W."/>
        </authorList>
    </citation>
    <scope>NUCLEOTIDE SEQUENCE [GENOMIC DNA]</scope>
</reference>
<reference key="2">
    <citation type="journal article" date="2003" name="Microbiol. Mol. Biol. Rev.">
        <title>Bacteriophage T4 genome.</title>
        <authorList>
            <person name="Miller E.S."/>
            <person name="Kutter E."/>
            <person name="Mosig G."/>
            <person name="Arisaka F."/>
            <person name="Kunisawa T."/>
            <person name="Ruger W."/>
        </authorList>
    </citation>
    <scope>NUCLEOTIDE SEQUENCE [LARGE SCALE GENOMIC DNA]</scope>
</reference>
<protein>
    <recommendedName>
        <fullName>Uncharacterized 8.5 kDa protein in mobB-Gp55 intergenic region</fullName>
    </recommendedName>
</protein>
<proteinExistence type="predicted"/>
<organismHost>
    <name type="scientific">Escherichia coli</name>
    <dbReference type="NCBI Taxonomy" id="562"/>
</organismHost>
<name>Y03I_BPT4</name>
<dbReference type="EMBL" id="X01804">
    <property type="status" value="NOT_ANNOTATED_CDS"/>
    <property type="molecule type" value="Genomic_DNA"/>
</dbReference>
<dbReference type="EMBL" id="AF158101">
    <property type="protein sequence ID" value="AAD42531.1"/>
    <property type="molecule type" value="Genomic_DNA"/>
</dbReference>
<dbReference type="KEGG" id="vg:1258804"/>
<dbReference type="OrthoDB" id="22774at10239"/>
<dbReference type="Proteomes" id="UP000009087">
    <property type="component" value="Segment"/>
</dbReference>
<dbReference type="InterPro" id="IPR020248">
    <property type="entry name" value="Y03I"/>
</dbReference>
<dbReference type="Pfam" id="PF17595">
    <property type="entry name" value="DUF5491"/>
    <property type="match status" value="1"/>
</dbReference>
<organism>
    <name type="scientific">Enterobacteria phage T4</name>
    <name type="common">Bacteriophage T4</name>
    <dbReference type="NCBI Taxonomy" id="10665"/>
    <lineage>
        <taxon>Viruses</taxon>
        <taxon>Duplodnaviria</taxon>
        <taxon>Heunggongvirae</taxon>
        <taxon>Uroviricota</taxon>
        <taxon>Caudoviricetes</taxon>
        <taxon>Straboviridae</taxon>
        <taxon>Tevenvirinae</taxon>
        <taxon>Tequatrovirus</taxon>
    </lineage>
</organism>
<keyword id="KW-1185">Reference proteome</keyword>